<proteinExistence type="inferred from homology"/>
<sequence length="179" mass="18957">MAELATIARPYAEALFRVAEGGDISAWSTLVQELAQVAQLPEVLSVASSPKVSRTQVAELLLAALKSPLASGAQAKNFVQMLVDNHRIALLPEIAVQFEALKNAREGAADVQIVSAFPLEGAQLAELVTSLERKFKRKLKPAVEVDSSLIGGVRVTVGDEVLDTSVRARLAGMQAALTA</sequence>
<keyword id="KW-0066">ATP synthesis</keyword>
<keyword id="KW-0997">Cell inner membrane</keyword>
<keyword id="KW-1003">Cell membrane</keyword>
<keyword id="KW-0139">CF(1)</keyword>
<keyword id="KW-0375">Hydrogen ion transport</keyword>
<keyword id="KW-0406">Ion transport</keyword>
<keyword id="KW-0472">Membrane</keyword>
<keyword id="KW-0813">Transport</keyword>
<feature type="chain" id="PRO_0000370922" description="ATP synthase subunit delta">
    <location>
        <begin position="1"/>
        <end position="179"/>
    </location>
</feature>
<name>ATPD_BURM9</name>
<protein>
    <recommendedName>
        <fullName evidence="1">ATP synthase subunit delta</fullName>
    </recommendedName>
    <alternativeName>
        <fullName evidence="1">ATP synthase F(1) sector subunit delta</fullName>
    </alternativeName>
    <alternativeName>
        <fullName evidence="1">F-type ATPase subunit delta</fullName>
        <shortName evidence="1">F-ATPase subunit delta</shortName>
    </alternativeName>
</protein>
<reference key="1">
    <citation type="journal article" date="2010" name="Genome Biol. Evol.">
        <title>Continuing evolution of Burkholderia mallei through genome reduction and large-scale rearrangements.</title>
        <authorList>
            <person name="Losada L."/>
            <person name="Ronning C.M."/>
            <person name="DeShazer D."/>
            <person name="Woods D."/>
            <person name="Fedorova N."/>
            <person name="Kim H.S."/>
            <person name="Shabalina S.A."/>
            <person name="Pearson T.R."/>
            <person name="Brinkac L."/>
            <person name="Tan P."/>
            <person name="Nandi T."/>
            <person name="Crabtree J."/>
            <person name="Badger J."/>
            <person name="Beckstrom-Sternberg S."/>
            <person name="Saqib M."/>
            <person name="Schutzer S.E."/>
            <person name="Keim P."/>
            <person name="Nierman W.C."/>
        </authorList>
    </citation>
    <scope>NUCLEOTIDE SEQUENCE [LARGE SCALE GENOMIC DNA]</scope>
    <source>
        <strain>NCTC 10229</strain>
    </source>
</reference>
<evidence type="ECO:0000255" key="1">
    <source>
        <dbReference type="HAMAP-Rule" id="MF_01416"/>
    </source>
</evidence>
<gene>
    <name evidence="1" type="primary">atpH</name>
    <name type="ordered locus">BMA10229_A1590</name>
</gene>
<dbReference type="EMBL" id="CP000546">
    <property type="protein sequence ID" value="ABN01897.1"/>
    <property type="molecule type" value="Genomic_DNA"/>
</dbReference>
<dbReference type="RefSeq" id="WP_004195829.1">
    <property type="nucleotide sequence ID" value="NC_008836.1"/>
</dbReference>
<dbReference type="SMR" id="A2S6K1"/>
<dbReference type="KEGG" id="bml:BMA10229_A1590"/>
<dbReference type="HOGENOM" id="CLU_085114_3_0_4"/>
<dbReference type="Proteomes" id="UP000002283">
    <property type="component" value="Chromosome I"/>
</dbReference>
<dbReference type="GO" id="GO:0005886">
    <property type="term" value="C:plasma membrane"/>
    <property type="evidence" value="ECO:0007669"/>
    <property type="project" value="UniProtKB-SubCell"/>
</dbReference>
<dbReference type="GO" id="GO:0045259">
    <property type="term" value="C:proton-transporting ATP synthase complex"/>
    <property type="evidence" value="ECO:0007669"/>
    <property type="project" value="UniProtKB-KW"/>
</dbReference>
<dbReference type="GO" id="GO:0046933">
    <property type="term" value="F:proton-transporting ATP synthase activity, rotational mechanism"/>
    <property type="evidence" value="ECO:0007669"/>
    <property type="project" value="UniProtKB-UniRule"/>
</dbReference>
<dbReference type="Gene3D" id="1.10.520.20">
    <property type="entry name" value="N-terminal domain of the delta subunit of the F1F0-ATP synthase"/>
    <property type="match status" value="1"/>
</dbReference>
<dbReference type="HAMAP" id="MF_01416">
    <property type="entry name" value="ATP_synth_delta_bact"/>
    <property type="match status" value="1"/>
</dbReference>
<dbReference type="InterPro" id="IPR026015">
    <property type="entry name" value="ATP_synth_OSCP/delta_N_sf"/>
</dbReference>
<dbReference type="InterPro" id="IPR000711">
    <property type="entry name" value="ATPase_OSCP/dsu"/>
</dbReference>
<dbReference type="NCBIfam" id="TIGR01145">
    <property type="entry name" value="ATP_synt_delta"/>
    <property type="match status" value="1"/>
</dbReference>
<dbReference type="NCBIfam" id="NF004402">
    <property type="entry name" value="PRK05758.2-2"/>
    <property type="match status" value="1"/>
</dbReference>
<dbReference type="PANTHER" id="PTHR11910">
    <property type="entry name" value="ATP SYNTHASE DELTA CHAIN"/>
    <property type="match status" value="1"/>
</dbReference>
<dbReference type="Pfam" id="PF00213">
    <property type="entry name" value="OSCP"/>
    <property type="match status" value="1"/>
</dbReference>
<dbReference type="PRINTS" id="PR00125">
    <property type="entry name" value="ATPASEDELTA"/>
</dbReference>
<dbReference type="SUPFAM" id="SSF47928">
    <property type="entry name" value="N-terminal domain of the delta subunit of the F1F0-ATP synthase"/>
    <property type="match status" value="1"/>
</dbReference>
<accession>A2S6K1</accession>
<organism>
    <name type="scientific">Burkholderia mallei (strain NCTC 10229)</name>
    <dbReference type="NCBI Taxonomy" id="412022"/>
    <lineage>
        <taxon>Bacteria</taxon>
        <taxon>Pseudomonadati</taxon>
        <taxon>Pseudomonadota</taxon>
        <taxon>Betaproteobacteria</taxon>
        <taxon>Burkholderiales</taxon>
        <taxon>Burkholderiaceae</taxon>
        <taxon>Burkholderia</taxon>
        <taxon>pseudomallei group</taxon>
    </lineage>
</organism>
<comment type="function">
    <text evidence="1">F(1)F(0) ATP synthase produces ATP from ADP in the presence of a proton or sodium gradient. F-type ATPases consist of two structural domains, F(1) containing the extramembraneous catalytic core and F(0) containing the membrane proton channel, linked together by a central stalk and a peripheral stalk. During catalysis, ATP synthesis in the catalytic domain of F(1) is coupled via a rotary mechanism of the central stalk subunits to proton translocation.</text>
</comment>
<comment type="function">
    <text evidence="1">This protein is part of the stalk that links CF(0) to CF(1). It either transmits conformational changes from CF(0) to CF(1) or is implicated in proton conduction.</text>
</comment>
<comment type="subunit">
    <text evidence="1">F-type ATPases have 2 components, F(1) - the catalytic core - and F(0) - the membrane proton channel. F(1) has five subunits: alpha(3), beta(3), gamma(1), delta(1), epsilon(1). F(0) has three main subunits: a(1), b(2) and c(10-14). The alpha and beta chains form an alternating ring which encloses part of the gamma chain. F(1) is attached to F(0) by a central stalk formed by the gamma and epsilon chains, while a peripheral stalk is formed by the delta and b chains.</text>
</comment>
<comment type="subcellular location">
    <subcellularLocation>
        <location evidence="1">Cell inner membrane</location>
        <topology evidence="1">Peripheral membrane protein</topology>
    </subcellularLocation>
</comment>
<comment type="similarity">
    <text evidence="1">Belongs to the ATPase delta chain family.</text>
</comment>